<sequence length="809" mass="90331">MAMKKLLIASLLFSSATVYGAEGFVVKDIHFEGLQRVAVGAALLSMPVRTGDTVNDEDISNTIRALFATGNFEDVRVLRDGDTLLVQVKERPTIASITFSGNKSVKDDMLKQNLEASGVRVGESLDRTTLSDIEKGLEDFYYSVGKYSASVKAVVTPLPRNRVDLKLVFQEGVSAKIQQINIVGNHAFSTDELISHFQLRDEVPWWNVVGDRKYQKQKLAGDLETLRSYYLDRGYARFNIDSTQVSLTPDKKGIYITVNITEGDQYKLSGVQVSGNLAGHSAEIENLTKIEPGELYNGTKVTKMEDDIKKLLGRYGYAYPRVQSQPEINDADKTVKLRVNVDAGNRFYVRKIRFEGNDTSKDSVLRREMRQMEGAWLGSDLVDQGKERLNRLGYFETVDTDTQRVPGSPDQVDVVYKVKERNTGSFNFGIGYGTESGVSFQAGVQQDNWLGTGYSVGINGTKNDYQTYTELSVTNPYFTVDGVSLGGRIFYNDFQADDADLSDYTNKSYGTDVTLGFPINEYNTLRAGLGYVHNSLSNMQPQVAMWRYLNSMGEYPSNTNDRNSFSANDFTFNYGWTYNKLDRGFFPTEGTRVNLNGKVTIPGSDNEYYKATLDTATYVPIDDDHKWVVLGRTRWGYGDGIGGKEMPFYENFYAGGSSTVRGFQSNTIGPKAVYYPASSRHDGDDDYDNDCKSTETAPCKSDDAVGGNAMAVASLEFITPTPFISDKYANSVRTSFFWDVGTVWDTNWDSNAYAGYPDYSDPSNIRMSAGIALQWMSPLGPLVFSYAQPFKKYDGDKSEQFQFNIGKTW</sequence>
<keyword id="KW-0998">Cell outer membrane</keyword>
<keyword id="KW-0472">Membrane</keyword>
<keyword id="KW-1185">Reference proteome</keyword>
<keyword id="KW-0677">Repeat</keyword>
<keyword id="KW-0732">Signal</keyword>
<keyword id="KW-0812">Transmembrane</keyword>
<keyword id="KW-1134">Transmembrane beta strand</keyword>
<accession>A8ALB1</accession>
<evidence type="ECO:0000255" key="1">
    <source>
        <dbReference type="HAMAP-Rule" id="MF_01430"/>
    </source>
</evidence>
<evidence type="ECO:0000255" key="2">
    <source>
        <dbReference type="PROSITE-ProRule" id="PRU01115"/>
    </source>
</evidence>
<proteinExistence type="inferred from homology"/>
<feature type="signal peptide" evidence="1">
    <location>
        <begin position="1"/>
        <end position="20"/>
    </location>
</feature>
<feature type="chain" id="PRO_1000024383" description="Outer membrane protein assembly factor BamA">
    <location>
        <begin position="21"/>
        <end position="809"/>
    </location>
</feature>
<feature type="domain" description="POTRA 1" evidence="2">
    <location>
        <begin position="24"/>
        <end position="91"/>
    </location>
</feature>
<feature type="domain" description="POTRA 2" evidence="2">
    <location>
        <begin position="92"/>
        <end position="172"/>
    </location>
</feature>
<feature type="domain" description="POTRA 3" evidence="2">
    <location>
        <begin position="175"/>
        <end position="263"/>
    </location>
</feature>
<feature type="domain" description="POTRA 4" evidence="2">
    <location>
        <begin position="266"/>
        <end position="344"/>
    </location>
</feature>
<feature type="domain" description="POTRA 5" evidence="2">
    <location>
        <begin position="347"/>
        <end position="421"/>
    </location>
</feature>
<name>BAMA_CITK8</name>
<dbReference type="EMBL" id="CP000822">
    <property type="protein sequence ID" value="ABV14274.1"/>
    <property type="molecule type" value="Genomic_DNA"/>
</dbReference>
<dbReference type="RefSeq" id="WP_012133980.1">
    <property type="nucleotide sequence ID" value="NC_009792.1"/>
</dbReference>
<dbReference type="BMRB" id="A8ALB1"/>
<dbReference type="SMR" id="A8ALB1"/>
<dbReference type="STRING" id="290338.CKO_03189"/>
<dbReference type="GeneID" id="45136974"/>
<dbReference type="KEGG" id="cko:CKO_03189"/>
<dbReference type="HOGENOM" id="CLU_007664_1_0_6"/>
<dbReference type="OrthoDB" id="9803054at2"/>
<dbReference type="Proteomes" id="UP000008148">
    <property type="component" value="Chromosome"/>
</dbReference>
<dbReference type="GO" id="GO:1990063">
    <property type="term" value="C:Bam protein complex"/>
    <property type="evidence" value="ECO:0007669"/>
    <property type="project" value="TreeGrafter"/>
</dbReference>
<dbReference type="GO" id="GO:0043165">
    <property type="term" value="P:Gram-negative-bacterium-type cell outer membrane assembly"/>
    <property type="evidence" value="ECO:0007669"/>
    <property type="project" value="UniProtKB-UniRule"/>
</dbReference>
<dbReference type="GO" id="GO:0051205">
    <property type="term" value="P:protein insertion into membrane"/>
    <property type="evidence" value="ECO:0007669"/>
    <property type="project" value="UniProtKB-UniRule"/>
</dbReference>
<dbReference type="FunFam" id="2.40.160.50:FF:000001">
    <property type="entry name" value="Outer membrane protein assembly factor BamA"/>
    <property type="match status" value="1"/>
</dbReference>
<dbReference type="FunFam" id="3.10.20.310:FF:000001">
    <property type="entry name" value="Outer membrane protein assembly factor BamA"/>
    <property type="match status" value="1"/>
</dbReference>
<dbReference type="FunFam" id="3.10.20.310:FF:000002">
    <property type="entry name" value="Outer membrane protein assembly factor BamA"/>
    <property type="match status" value="1"/>
</dbReference>
<dbReference type="FunFam" id="3.10.20.310:FF:000003">
    <property type="entry name" value="Outer membrane protein assembly factor BamA"/>
    <property type="match status" value="1"/>
</dbReference>
<dbReference type="FunFam" id="3.10.20.310:FF:000004">
    <property type="entry name" value="Outer membrane protein assembly factor BamA"/>
    <property type="match status" value="1"/>
</dbReference>
<dbReference type="FunFam" id="3.10.20.310:FF:000005">
    <property type="entry name" value="Outer membrane protein assembly factor BamA"/>
    <property type="match status" value="1"/>
</dbReference>
<dbReference type="Gene3D" id="3.10.20.310">
    <property type="entry name" value="membrane protein fhac"/>
    <property type="match status" value="5"/>
</dbReference>
<dbReference type="Gene3D" id="2.40.160.50">
    <property type="entry name" value="membrane protein fhac: a member of the omp85/tpsb transporter family"/>
    <property type="match status" value="1"/>
</dbReference>
<dbReference type="HAMAP" id="MF_01430">
    <property type="entry name" value="OM_assembly_BamA"/>
    <property type="match status" value="1"/>
</dbReference>
<dbReference type="InterPro" id="IPR000184">
    <property type="entry name" value="Bac_surfAg_D15"/>
</dbReference>
<dbReference type="InterPro" id="IPR010827">
    <property type="entry name" value="BamA/TamA_POTRA"/>
</dbReference>
<dbReference type="InterPro" id="IPR039910">
    <property type="entry name" value="D15-like"/>
</dbReference>
<dbReference type="InterPro" id="IPR023707">
    <property type="entry name" value="OM_assembly_BamA"/>
</dbReference>
<dbReference type="InterPro" id="IPR034746">
    <property type="entry name" value="POTRA"/>
</dbReference>
<dbReference type="NCBIfam" id="TIGR03303">
    <property type="entry name" value="OM_YaeT"/>
    <property type="match status" value="1"/>
</dbReference>
<dbReference type="NCBIfam" id="NF008287">
    <property type="entry name" value="PRK11067.1"/>
    <property type="match status" value="1"/>
</dbReference>
<dbReference type="PANTHER" id="PTHR12815:SF23">
    <property type="entry name" value="OUTER MEMBRANE PROTEIN ASSEMBLY FACTOR BAMA"/>
    <property type="match status" value="1"/>
</dbReference>
<dbReference type="PANTHER" id="PTHR12815">
    <property type="entry name" value="SORTING AND ASSEMBLY MACHINERY SAMM50 PROTEIN FAMILY MEMBER"/>
    <property type="match status" value="1"/>
</dbReference>
<dbReference type="Pfam" id="PF01103">
    <property type="entry name" value="Omp85"/>
    <property type="match status" value="1"/>
</dbReference>
<dbReference type="Pfam" id="PF07244">
    <property type="entry name" value="POTRA"/>
    <property type="match status" value="4"/>
</dbReference>
<dbReference type="PIRSF" id="PIRSF006076">
    <property type="entry name" value="OM_assembly_OMP85"/>
    <property type="match status" value="1"/>
</dbReference>
<dbReference type="PROSITE" id="PS51779">
    <property type="entry name" value="POTRA"/>
    <property type="match status" value="5"/>
</dbReference>
<gene>
    <name evidence="1" type="primary">bamA</name>
    <name type="synonym">yaeT</name>
    <name type="ordered locus">CKO_03189</name>
</gene>
<organism>
    <name type="scientific">Citrobacter koseri (strain ATCC BAA-895 / CDC 4225-83 / SGSC4696)</name>
    <dbReference type="NCBI Taxonomy" id="290338"/>
    <lineage>
        <taxon>Bacteria</taxon>
        <taxon>Pseudomonadati</taxon>
        <taxon>Pseudomonadota</taxon>
        <taxon>Gammaproteobacteria</taxon>
        <taxon>Enterobacterales</taxon>
        <taxon>Enterobacteriaceae</taxon>
        <taxon>Citrobacter</taxon>
    </lineage>
</organism>
<protein>
    <recommendedName>
        <fullName evidence="1">Outer membrane protein assembly factor BamA</fullName>
    </recommendedName>
</protein>
<reference key="1">
    <citation type="submission" date="2007-08" db="EMBL/GenBank/DDBJ databases">
        <authorList>
            <consortium name="The Citrobacter koseri Genome Sequencing Project"/>
            <person name="McClelland M."/>
            <person name="Sanderson E.K."/>
            <person name="Porwollik S."/>
            <person name="Spieth J."/>
            <person name="Clifton W.S."/>
            <person name="Latreille P."/>
            <person name="Courtney L."/>
            <person name="Wang C."/>
            <person name="Pepin K."/>
            <person name="Bhonagiri V."/>
            <person name="Nash W."/>
            <person name="Johnson M."/>
            <person name="Thiruvilangam P."/>
            <person name="Wilson R."/>
        </authorList>
    </citation>
    <scope>NUCLEOTIDE SEQUENCE [LARGE SCALE GENOMIC DNA]</scope>
    <source>
        <strain>ATCC BAA-895 / CDC 4225-83 / SGSC4696</strain>
    </source>
</reference>
<comment type="function">
    <text evidence="1">Part of the outer membrane protein assembly complex, which is involved in assembly and insertion of beta-barrel proteins into the outer membrane. Constitutes, with BamD, the core component of the assembly machinery.</text>
</comment>
<comment type="subunit">
    <text evidence="1">Part of the Bam complex, which is composed of the outer membrane protein BamA, and four lipoproteins BamB, BamC, BamD and BamE.</text>
</comment>
<comment type="subcellular location">
    <subcellularLocation>
        <location evidence="1">Cell outer membrane</location>
    </subcellularLocation>
</comment>
<comment type="similarity">
    <text evidence="1">Belongs to the BamA family.</text>
</comment>